<proteinExistence type="evidence at protein level"/>
<gene>
    <name type="primary">Kdm4A</name>
    <name type="ORF">CG15835</name>
</gene>
<name>KDM4A_DROME</name>
<organism>
    <name type="scientific">Drosophila melanogaster</name>
    <name type="common">Fruit fly</name>
    <dbReference type="NCBI Taxonomy" id="7227"/>
    <lineage>
        <taxon>Eukaryota</taxon>
        <taxon>Metazoa</taxon>
        <taxon>Ecdysozoa</taxon>
        <taxon>Arthropoda</taxon>
        <taxon>Hexapoda</taxon>
        <taxon>Insecta</taxon>
        <taxon>Pterygota</taxon>
        <taxon>Neoptera</taxon>
        <taxon>Endopterygota</taxon>
        <taxon>Diptera</taxon>
        <taxon>Brachycera</taxon>
        <taxon>Muscomorpha</taxon>
        <taxon>Ephydroidea</taxon>
        <taxon>Drosophilidae</taxon>
        <taxon>Drosophila</taxon>
        <taxon>Sophophora</taxon>
    </lineage>
</organism>
<reference key="1">
    <citation type="journal article" date="2000" name="Science">
        <title>The genome sequence of Drosophila melanogaster.</title>
        <authorList>
            <person name="Adams M.D."/>
            <person name="Celniker S.E."/>
            <person name="Holt R.A."/>
            <person name="Evans C.A."/>
            <person name="Gocayne J.D."/>
            <person name="Amanatides P.G."/>
            <person name="Scherer S.E."/>
            <person name="Li P.W."/>
            <person name="Hoskins R.A."/>
            <person name="Galle R.F."/>
            <person name="George R.A."/>
            <person name="Lewis S.E."/>
            <person name="Richards S."/>
            <person name="Ashburner M."/>
            <person name="Henderson S.N."/>
            <person name="Sutton G.G."/>
            <person name="Wortman J.R."/>
            <person name="Yandell M.D."/>
            <person name="Zhang Q."/>
            <person name="Chen L.X."/>
            <person name="Brandon R.C."/>
            <person name="Rogers Y.-H.C."/>
            <person name="Blazej R.G."/>
            <person name="Champe M."/>
            <person name="Pfeiffer B.D."/>
            <person name="Wan K.H."/>
            <person name="Doyle C."/>
            <person name="Baxter E.G."/>
            <person name="Helt G."/>
            <person name="Nelson C.R."/>
            <person name="Miklos G.L.G."/>
            <person name="Abril J.F."/>
            <person name="Agbayani A."/>
            <person name="An H.-J."/>
            <person name="Andrews-Pfannkoch C."/>
            <person name="Baldwin D."/>
            <person name="Ballew R.M."/>
            <person name="Basu A."/>
            <person name="Baxendale J."/>
            <person name="Bayraktaroglu L."/>
            <person name="Beasley E.M."/>
            <person name="Beeson K.Y."/>
            <person name="Benos P.V."/>
            <person name="Berman B.P."/>
            <person name="Bhandari D."/>
            <person name="Bolshakov S."/>
            <person name="Borkova D."/>
            <person name="Botchan M.R."/>
            <person name="Bouck J."/>
            <person name="Brokstein P."/>
            <person name="Brottier P."/>
            <person name="Burtis K.C."/>
            <person name="Busam D.A."/>
            <person name="Butler H."/>
            <person name="Cadieu E."/>
            <person name="Center A."/>
            <person name="Chandra I."/>
            <person name="Cherry J.M."/>
            <person name="Cawley S."/>
            <person name="Dahlke C."/>
            <person name="Davenport L.B."/>
            <person name="Davies P."/>
            <person name="de Pablos B."/>
            <person name="Delcher A."/>
            <person name="Deng Z."/>
            <person name="Mays A.D."/>
            <person name="Dew I."/>
            <person name="Dietz S.M."/>
            <person name="Dodson K."/>
            <person name="Doup L.E."/>
            <person name="Downes M."/>
            <person name="Dugan-Rocha S."/>
            <person name="Dunkov B.C."/>
            <person name="Dunn P."/>
            <person name="Durbin K.J."/>
            <person name="Evangelista C.C."/>
            <person name="Ferraz C."/>
            <person name="Ferriera S."/>
            <person name="Fleischmann W."/>
            <person name="Fosler C."/>
            <person name="Gabrielian A.E."/>
            <person name="Garg N.S."/>
            <person name="Gelbart W.M."/>
            <person name="Glasser K."/>
            <person name="Glodek A."/>
            <person name="Gong F."/>
            <person name="Gorrell J.H."/>
            <person name="Gu Z."/>
            <person name="Guan P."/>
            <person name="Harris M."/>
            <person name="Harris N.L."/>
            <person name="Harvey D.A."/>
            <person name="Heiman T.J."/>
            <person name="Hernandez J.R."/>
            <person name="Houck J."/>
            <person name="Hostin D."/>
            <person name="Houston K.A."/>
            <person name="Howland T.J."/>
            <person name="Wei M.-H."/>
            <person name="Ibegwam C."/>
            <person name="Jalali M."/>
            <person name="Kalush F."/>
            <person name="Karpen G.H."/>
            <person name="Ke Z."/>
            <person name="Kennison J.A."/>
            <person name="Ketchum K.A."/>
            <person name="Kimmel B.E."/>
            <person name="Kodira C.D."/>
            <person name="Kraft C.L."/>
            <person name="Kravitz S."/>
            <person name="Kulp D."/>
            <person name="Lai Z."/>
            <person name="Lasko P."/>
            <person name="Lei Y."/>
            <person name="Levitsky A.A."/>
            <person name="Li J.H."/>
            <person name="Li Z."/>
            <person name="Liang Y."/>
            <person name="Lin X."/>
            <person name="Liu X."/>
            <person name="Mattei B."/>
            <person name="McIntosh T.C."/>
            <person name="McLeod M.P."/>
            <person name="McPherson D."/>
            <person name="Merkulov G."/>
            <person name="Milshina N.V."/>
            <person name="Mobarry C."/>
            <person name="Morris J."/>
            <person name="Moshrefi A."/>
            <person name="Mount S.M."/>
            <person name="Moy M."/>
            <person name="Murphy B."/>
            <person name="Murphy L."/>
            <person name="Muzny D.M."/>
            <person name="Nelson D.L."/>
            <person name="Nelson D.R."/>
            <person name="Nelson K.A."/>
            <person name="Nixon K."/>
            <person name="Nusskern D.R."/>
            <person name="Pacleb J.M."/>
            <person name="Palazzolo M."/>
            <person name="Pittman G.S."/>
            <person name="Pan S."/>
            <person name="Pollard J."/>
            <person name="Puri V."/>
            <person name="Reese M.G."/>
            <person name="Reinert K."/>
            <person name="Remington K."/>
            <person name="Saunders R.D.C."/>
            <person name="Scheeler F."/>
            <person name="Shen H."/>
            <person name="Shue B.C."/>
            <person name="Siden-Kiamos I."/>
            <person name="Simpson M."/>
            <person name="Skupski M.P."/>
            <person name="Smith T.J."/>
            <person name="Spier E."/>
            <person name="Spradling A.C."/>
            <person name="Stapleton M."/>
            <person name="Strong R."/>
            <person name="Sun E."/>
            <person name="Svirskas R."/>
            <person name="Tector C."/>
            <person name="Turner R."/>
            <person name="Venter E."/>
            <person name="Wang A.H."/>
            <person name="Wang X."/>
            <person name="Wang Z.-Y."/>
            <person name="Wassarman D.A."/>
            <person name="Weinstock G.M."/>
            <person name="Weissenbach J."/>
            <person name="Williams S.M."/>
            <person name="Woodage T."/>
            <person name="Worley K.C."/>
            <person name="Wu D."/>
            <person name="Yang S."/>
            <person name="Yao Q.A."/>
            <person name="Ye J."/>
            <person name="Yeh R.-F."/>
            <person name="Zaveri J.S."/>
            <person name="Zhan M."/>
            <person name="Zhang G."/>
            <person name="Zhao Q."/>
            <person name="Zheng L."/>
            <person name="Zheng X.H."/>
            <person name="Zhong F.N."/>
            <person name="Zhong W."/>
            <person name="Zhou X."/>
            <person name="Zhu S.C."/>
            <person name="Zhu X."/>
            <person name="Smith H.O."/>
            <person name="Gibbs R.A."/>
            <person name="Myers E.W."/>
            <person name="Rubin G.M."/>
            <person name="Venter J.C."/>
        </authorList>
    </citation>
    <scope>NUCLEOTIDE SEQUENCE [LARGE SCALE GENOMIC DNA]</scope>
    <source>
        <strain>Berkeley</strain>
    </source>
</reference>
<reference key="2">
    <citation type="journal article" date="2002" name="Genome Biol.">
        <title>Annotation of the Drosophila melanogaster euchromatic genome: a systematic review.</title>
        <authorList>
            <person name="Misra S."/>
            <person name="Crosby M.A."/>
            <person name="Mungall C.J."/>
            <person name="Matthews B.B."/>
            <person name="Campbell K.S."/>
            <person name="Hradecky P."/>
            <person name="Huang Y."/>
            <person name="Kaminker J.S."/>
            <person name="Millburn G.H."/>
            <person name="Prochnik S.E."/>
            <person name="Smith C.D."/>
            <person name="Tupy J.L."/>
            <person name="Whitfield E.J."/>
            <person name="Bayraktaroglu L."/>
            <person name="Berman B.P."/>
            <person name="Bettencourt B.R."/>
            <person name="Celniker S.E."/>
            <person name="de Grey A.D.N.J."/>
            <person name="Drysdale R.A."/>
            <person name="Harris N.L."/>
            <person name="Richter J."/>
            <person name="Russo S."/>
            <person name="Schroeder A.J."/>
            <person name="Shu S.Q."/>
            <person name="Stapleton M."/>
            <person name="Yamada C."/>
            <person name="Ashburner M."/>
            <person name="Gelbart W.M."/>
            <person name="Rubin G.M."/>
            <person name="Lewis S.E."/>
        </authorList>
    </citation>
    <scope>GENOME REANNOTATION</scope>
    <source>
        <strain>Berkeley</strain>
    </source>
</reference>
<reference key="3">
    <citation type="journal article" date="2002" name="Genome Biol.">
        <title>A Drosophila full-length cDNA resource.</title>
        <authorList>
            <person name="Stapleton M."/>
            <person name="Carlson J.W."/>
            <person name="Brokstein P."/>
            <person name="Yu C."/>
            <person name="Champe M."/>
            <person name="George R.A."/>
            <person name="Guarin H."/>
            <person name="Kronmiller B."/>
            <person name="Pacleb J.M."/>
            <person name="Park S."/>
            <person name="Wan K.H."/>
            <person name="Rubin G.M."/>
            <person name="Celniker S.E."/>
        </authorList>
    </citation>
    <scope>NUCLEOTIDE SEQUENCE [LARGE SCALE MRNA]</scope>
    <source>
        <strain>Berkeley</strain>
        <tissue>Embryo</tissue>
    </source>
</reference>
<reference key="4">
    <citation type="journal article" date="2008" name="J. Proteome Res.">
        <title>Phosphoproteome analysis of Drosophila melanogaster embryos.</title>
        <authorList>
            <person name="Zhai B."/>
            <person name="Villen J."/>
            <person name="Beausoleil S.A."/>
            <person name="Mintseris J."/>
            <person name="Gygi S.P."/>
        </authorList>
    </citation>
    <scope>PHOSPHORYLATION [LARGE SCALE ANALYSIS] AT SER-409</scope>
    <scope>IDENTIFICATION BY MASS SPECTROMETRY</scope>
    <source>
        <tissue>Embryo</tissue>
    </source>
</reference>
<feature type="chain" id="PRO_0000234379" description="Probable lysine-specific demethylase 4A">
    <location>
        <begin position="1"/>
        <end position="495"/>
    </location>
</feature>
<feature type="domain" description="JmjN" evidence="4">
    <location>
        <begin position="18"/>
        <end position="60"/>
    </location>
</feature>
<feature type="domain" description="JmjC" evidence="5">
    <location>
        <begin position="149"/>
        <end position="315"/>
    </location>
</feature>
<feature type="binding site" evidence="2">
    <location>
        <position position="139"/>
    </location>
    <ligand>
        <name>2-oxoglutarate</name>
        <dbReference type="ChEBI" id="CHEBI:16810"/>
    </ligand>
</feature>
<feature type="binding site" evidence="5">
    <location>
        <position position="195"/>
    </location>
    <ligand>
        <name>Fe cation</name>
        <dbReference type="ChEBI" id="CHEBI:24875"/>
        <note>catalytic</note>
    </ligand>
</feature>
<feature type="binding site" evidence="5">
    <location>
        <position position="197"/>
    </location>
    <ligand>
        <name>Fe cation</name>
        <dbReference type="ChEBI" id="CHEBI:24875"/>
        <note>catalytic</note>
    </ligand>
</feature>
<feature type="binding site" evidence="1">
    <location>
        <position position="205"/>
    </location>
    <ligand>
        <name>2-oxoglutarate</name>
        <dbReference type="ChEBI" id="CHEBI:16810"/>
    </ligand>
</feature>
<feature type="binding site" evidence="2">
    <location>
        <position position="213"/>
    </location>
    <ligand>
        <name>2-oxoglutarate</name>
        <dbReference type="ChEBI" id="CHEBI:16810"/>
    </ligand>
</feature>
<feature type="binding site" evidence="1">
    <location>
        <position position="241"/>
    </location>
    <ligand>
        <name>Zn(2+)</name>
        <dbReference type="ChEBI" id="CHEBI:29105"/>
    </ligand>
</feature>
<feature type="binding site" evidence="1">
    <location>
        <position position="247"/>
    </location>
    <ligand>
        <name>Zn(2+)</name>
        <dbReference type="ChEBI" id="CHEBI:29105"/>
    </ligand>
</feature>
<feature type="binding site" evidence="2">
    <location>
        <position position="248"/>
    </location>
    <ligand>
        <name>2-oxoglutarate</name>
        <dbReference type="ChEBI" id="CHEBI:16810"/>
    </ligand>
</feature>
<feature type="binding site" evidence="5">
    <location>
        <position position="283"/>
    </location>
    <ligand>
        <name>Fe cation</name>
        <dbReference type="ChEBI" id="CHEBI:24875"/>
        <note>catalytic</note>
    </ligand>
</feature>
<feature type="binding site" evidence="1">
    <location>
        <position position="313"/>
    </location>
    <ligand>
        <name>Zn(2+)</name>
        <dbReference type="ChEBI" id="CHEBI:29105"/>
    </ligand>
</feature>
<feature type="binding site" evidence="1">
    <location>
        <position position="315"/>
    </location>
    <ligand>
        <name>Zn(2+)</name>
        <dbReference type="ChEBI" id="CHEBI:29105"/>
    </ligand>
</feature>
<feature type="modified residue" description="Phosphoserine" evidence="6">
    <location>
        <position position="409"/>
    </location>
</feature>
<evidence type="ECO:0000250" key="1"/>
<evidence type="ECO:0000250" key="2">
    <source>
        <dbReference type="UniProtKB" id="B2RXH2"/>
    </source>
</evidence>
<evidence type="ECO:0000250" key="3">
    <source>
        <dbReference type="UniProtKB" id="O75164"/>
    </source>
</evidence>
<evidence type="ECO:0000255" key="4">
    <source>
        <dbReference type="PROSITE-ProRule" id="PRU00537"/>
    </source>
</evidence>
<evidence type="ECO:0000255" key="5">
    <source>
        <dbReference type="PROSITE-ProRule" id="PRU00538"/>
    </source>
</evidence>
<evidence type="ECO:0000269" key="6">
    <source>
    </source>
</evidence>
<evidence type="ECO:0000305" key="7"/>
<dbReference type="EC" id="1.14.11.66" evidence="3"/>
<dbReference type="EC" id="1.14.11.69" evidence="3"/>
<dbReference type="EMBL" id="AE013599">
    <property type="protein sequence ID" value="AAF59172.1"/>
    <property type="molecule type" value="Genomic_DNA"/>
</dbReference>
<dbReference type="EMBL" id="AY058636">
    <property type="protein sequence ID" value="AAL13865.1"/>
    <property type="molecule type" value="mRNA"/>
</dbReference>
<dbReference type="RefSeq" id="NP_610331.1">
    <property type="nucleotide sequence ID" value="NM_136487.4"/>
</dbReference>
<dbReference type="SMR" id="Q9V333"/>
<dbReference type="BioGRID" id="61608">
    <property type="interactions" value="8"/>
</dbReference>
<dbReference type="FunCoup" id="Q9V333">
    <property type="interactions" value="172"/>
</dbReference>
<dbReference type="IntAct" id="Q9V333">
    <property type="interactions" value="4"/>
</dbReference>
<dbReference type="STRING" id="7227.FBpp0087961"/>
<dbReference type="iPTMnet" id="Q9V333"/>
<dbReference type="PaxDb" id="7227-FBpp0087961"/>
<dbReference type="DNASU" id="35744"/>
<dbReference type="EnsemblMetazoa" id="FBtr0088886">
    <property type="protein sequence ID" value="FBpp0087961"/>
    <property type="gene ID" value="FBgn0033233"/>
</dbReference>
<dbReference type="GeneID" id="35744"/>
<dbReference type="KEGG" id="dme:Dmel_CG15835"/>
<dbReference type="UCSC" id="CG15835-RA">
    <property type="organism name" value="d. melanogaster"/>
</dbReference>
<dbReference type="AGR" id="FB:FBgn0033233"/>
<dbReference type="CTD" id="9682"/>
<dbReference type="FlyBase" id="FBgn0033233">
    <property type="gene designation" value="Kdm4A"/>
</dbReference>
<dbReference type="VEuPathDB" id="VectorBase:FBgn0033233"/>
<dbReference type="eggNOG" id="KOG0958">
    <property type="taxonomic scope" value="Eukaryota"/>
</dbReference>
<dbReference type="GeneTree" id="ENSGT00940000154930"/>
<dbReference type="InParanoid" id="Q9V333"/>
<dbReference type="OMA" id="RASICKC"/>
<dbReference type="OrthoDB" id="9547406at2759"/>
<dbReference type="PhylomeDB" id="Q9V333"/>
<dbReference type="BRENDA" id="1.14.11.65">
    <property type="organism ID" value="1994"/>
</dbReference>
<dbReference type="BRENDA" id="1.14.11.66">
    <property type="organism ID" value="1994"/>
</dbReference>
<dbReference type="BRENDA" id="1.14.11.67">
    <property type="organism ID" value="1994"/>
</dbReference>
<dbReference type="BRENDA" id="1.14.11.69">
    <property type="organism ID" value="1994"/>
</dbReference>
<dbReference type="BRENDA" id="1.14.11.B19">
    <property type="organism ID" value="1994"/>
</dbReference>
<dbReference type="Reactome" id="R-DME-5693565">
    <property type="pathway name" value="Recruitment and ATM-mediated phosphorylation of repair and signaling proteins at DNA double strand breaks"/>
</dbReference>
<dbReference type="Reactome" id="R-DME-9018519">
    <property type="pathway name" value="Estrogen-dependent gene expression"/>
</dbReference>
<dbReference type="SignaLink" id="Q9V333"/>
<dbReference type="BioGRID-ORCS" id="35744">
    <property type="hits" value="0 hits in 3 CRISPR screens"/>
</dbReference>
<dbReference type="ChiTaRS" id="Kdm4A">
    <property type="organism name" value="fly"/>
</dbReference>
<dbReference type="GenomeRNAi" id="35744"/>
<dbReference type="PRO" id="PR:Q9V333"/>
<dbReference type="Proteomes" id="UP000000803">
    <property type="component" value="Chromosome 2R"/>
</dbReference>
<dbReference type="Bgee" id="FBgn0033233">
    <property type="expression patterns" value="Expressed in egg cell and 80 other cell types or tissues"/>
</dbReference>
<dbReference type="ExpressionAtlas" id="Q9V333">
    <property type="expression patterns" value="baseline and differential"/>
</dbReference>
<dbReference type="GO" id="GO:0000785">
    <property type="term" value="C:chromatin"/>
    <property type="evidence" value="ECO:0000318"/>
    <property type="project" value="GO_Central"/>
</dbReference>
<dbReference type="GO" id="GO:0000792">
    <property type="term" value="C:heterochromatin"/>
    <property type="evidence" value="ECO:0000314"/>
    <property type="project" value="FlyBase"/>
</dbReference>
<dbReference type="GO" id="GO:0005634">
    <property type="term" value="C:nucleus"/>
    <property type="evidence" value="ECO:0000314"/>
    <property type="project" value="FlyBase"/>
</dbReference>
<dbReference type="GO" id="GO:0051864">
    <property type="term" value="F:histone H3K36 demethylase activity"/>
    <property type="evidence" value="ECO:0000250"/>
    <property type="project" value="UniProtKB"/>
</dbReference>
<dbReference type="GO" id="GO:0140681">
    <property type="term" value="F:histone H3K36me2/H3K36me3 demethylase activity"/>
    <property type="evidence" value="ECO:0000314"/>
    <property type="project" value="FlyBase"/>
</dbReference>
<dbReference type="GO" id="GO:0140760">
    <property type="term" value="F:histone H3K56me2/H3K56me3 demethylase activity"/>
    <property type="evidence" value="ECO:0000315"/>
    <property type="project" value="FlyBase"/>
</dbReference>
<dbReference type="GO" id="GO:0032454">
    <property type="term" value="F:histone H3K9 demethylase activity"/>
    <property type="evidence" value="ECO:0000318"/>
    <property type="project" value="GO_Central"/>
</dbReference>
<dbReference type="GO" id="GO:0140684">
    <property type="term" value="F:histone H3K9me2/H3K9me3 demethylase activity"/>
    <property type="evidence" value="ECO:0000315"/>
    <property type="project" value="FlyBase"/>
</dbReference>
<dbReference type="GO" id="GO:0046872">
    <property type="term" value="F:metal ion binding"/>
    <property type="evidence" value="ECO:0007669"/>
    <property type="project" value="UniProtKB-KW"/>
</dbReference>
<dbReference type="GO" id="GO:0006338">
    <property type="term" value="P:chromatin remodeling"/>
    <property type="evidence" value="ECO:0000318"/>
    <property type="project" value="GO_Central"/>
</dbReference>
<dbReference type="GO" id="GO:0048512">
    <property type="term" value="P:circadian behavior"/>
    <property type="evidence" value="ECO:0000315"/>
    <property type="project" value="UniProtKB"/>
</dbReference>
<dbReference type="GO" id="GO:0045892">
    <property type="term" value="P:negative regulation of DNA-templated transcription"/>
    <property type="evidence" value="ECO:0000250"/>
    <property type="project" value="UniProtKB"/>
</dbReference>
<dbReference type="GO" id="GO:0010628">
    <property type="term" value="P:positive regulation of gene expression"/>
    <property type="evidence" value="ECO:0000315"/>
    <property type="project" value="FlyBase"/>
</dbReference>
<dbReference type="GO" id="GO:0010468">
    <property type="term" value="P:regulation of gene expression"/>
    <property type="evidence" value="ECO:0000318"/>
    <property type="project" value="GO_Central"/>
</dbReference>
<dbReference type="FunFam" id="2.60.120.650:FF:000048">
    <property type="entry name" value="Lysine-specific demethylase 4A"/>
    <property type="match status" value="1"/>
</dbReference>
<dbReference type="Gene3D" id="2.60.120.650">
    <property type="entry name" value="Cupin"/>
    <property type="match status" value="1"/>
</dbReference>
<dbReference type="InterPro" id="IPR003347">
    <property type="entry name" value="JmjC_dom"/>
</dbReference>
<dbReference type="InterPro" id="IPR003349">
    <property type="entry name" value="JmjN"/>
</dbReference>
<dbReference type="PANTHER" id="PTHR10694">
    <property type="entry name" value="LYSINE-SPECIFIC DEMETHYLASE"/>
    <property type="match status" value="1"/>
</dbReference>
<dbReference type="PANTHER" id="PTHR10694:SF142">
    <property type="entry name" value="LYSINE-SPECIFIC DEMETHYLASE 4A-RELATED"/>
    <property type="match status" value="1"/>
</dbReference>
<dbReference type="Pfam" id="PF02373">
    <property type="entry name" value="JmjC"/>
    <property type="match status" value="1"/>
</dbReference>
<dbReference type="Pfam" id="PF02375">
    <property type="entry name" value="JmjN"/>
    <property type="match status" value="1"/>
</dbReference>
<dbReference type="SMART" id="SM00558">
    <property type="entry name" value="JmjC"/>
    <property type="match status" value="1"/>
</dbReference>
<dbReference type="SMART" id="SM00545">
    <property type="entry name" value="JmjN"/>
    <property type="match status" value="1"/>
</dbReference>
<dbReference type="SUPFAM" id="SSF51197">
    <property type="entry name" value="Clavaminate synthase-like"/>
    <property type="match status" value="1"/>
</dbReference>
<dbReference type="PROSITE" id="PS51184">
    <property type="entry name" value="JMJC"/>
    <property type="match status" value="1"/>
</dbReference>
<dbReference type="PROSITE" id="PS51183">
    <property type="entry name" value="JMJN"/>
    <property type="match status" value="1"/>
</dbReference>
<keyword id="KW-0156">Chromatin regulator</keyword>
<keyword id="KW-0223">Dioxygenase</keyword>
<keyword id="KW-0408">Iron</keyword>
<keyword id="KW-0479">Metal-binding</keyword>
<keyword id="KW-0539">Nucleus</keyword>
<keyword id="KW-0560">Oxidoreductase</keyword>
<keyword id="KW-0597">Phosphoprotein</keyword>
<keyword id="KW-1185">Reference proteome</keyword>
<keyword id="KW-0804">Transcription</keyword>
<keyword id="KW-0805">Transcription regulation</keyword>
<keyword id="KW-0862">Zinc</keyword>
<accession>Q9V333</accession>
<protein>
    <recommendedName>
        <fullName>Probable lysine-specific demethylase 4A</fullName>
        <ecNumber evidence="3">1.14.11.66</ecNumber>
        <ecNumber evidence="3">1.14.11.69</ecNumber>
    </recommendedName>
    <alternativeName>
        <fullName>Probable JmjC domain-containing histone demethylation protein 3A</fullName>
    </alternativeName>
    <alternativeName>
        <fullName evidence="7">Probable [histone H3]-trimethyl-L-lysine(36) demethylase 4A</fullName>
    </alternativeName>
    <alternativeName>
        <fullName evidence="7">Probable [histone H3]-trimethyl-L-lysine(9) demethylase 4A</fullName>
    </alternativeName>
</protein>
<sequence length="495" mass="56990">MSTRSSFADEEQNKVPRIMTFRPSYEEFQNFSAYIEYIESRGAHLAGLAKIQPPAEWVPRKSGYDIDNINMTIPAPICQVVTGAHGVYQQINIQQRRQMTLRQFMEKANSELHQTPRHFDYDDLERKYWKNITYISPLYAADVKGSLSDEDLDVWNIGRLDTILNLVNTDYNIIIDGVNTAYLYFGMWKSSFAWHTEDMDLYSINYLHFGAPKTWYAIPPAYGRRLEKLANETFSENYQECNAYLRHKMTMISPKVLRQHNIPYNKITQEAGEIMITFPFGYHAGFNHGFNGAESTNFASKRWIEYGKRASICRCRSDMVKISMETFVRRFQPERYDNWLKGQDMGCHPEEPGKICAAAPPTLNEYEKQENLRAAKSEEESPQKRGCSLAGNGCERNAESAEDVDDKASVSSYSSCRQLQPVVKLRKLPTIASVPEPSSAPKRYDFNTEAVVRVKRLWNELPCPDRGANLLTNGVVKNTKRMRFQTKVLTLDDED</sequence>
<comment type="function">
    <text evidence="1">Probable histone demethylase that specifically demethylates 'Lys-9' and 'Lys-36' residues of histone H3, thereby playing a central role in histone code. Demethylation of Lys residue generates formaldehyde and succinate (By similarity).</text>
</comment>
<comment type="catalytic activity">
    <reaction evidence="3">
        <text>N(6),N(6),N(6)-trimethyl-L-lysyl(9)-[histone H3] + 2 2-oxoglutarate + 2 O2 = N(6)-methyl-L-lysyl(9)-[histone H3] + 2 formaldehyde + 2 succinate + 2 CO2</text>
        <dbReference type="Rhea" id="RHEA:60200"/>
        <dbReference type="Rhea" id="RHEA-COMP:15538"/>
        <dbReference type="Rhea" id="RHEA-COMP:15542"/>
        <dbReference type="ChEBI" id="CHEBI:15379"/>
        <dbReference type="ChEBI" id="CHEBI:16526"/>
        <dbReference type="ChEBI" id="CHEBI:16810"/>
        <dbReference type="ChEBI" id="CHEBI:16842"/>
        <dbReference type="ChEBI" id="CHEBI:30031"/>
        <dbReference type="ChEBI" id="CHEBI:61929"/>
        <dbReference type="ChEBI" id="CHEBI:61961"/>
        <dbReference type="EC" id="1.14.11.66"/>
    </reaction>
</comment>
<comment type="catalytic activity">
    <reaction evidence="3">
        <text>N(6),N(6),N(6)-trimethyl-L-lysyl(36)-[histone H3] + 2 2-oxoglutarate + 2 O2 = N(6)-methyl-L-lysyl(36)-[histone H3] + 2 formaldehyde + 2 succinate + 2 CO2</text>
        <dbReference type="Rhea" id="RHEA:60236"/>
        <dbReference type="Rhea" id="RHEA-COMP:9786"/>
        <dbReference type="Rhea" id="RHEA-COMP:15536"/>
        <dbReference type="ChEBI" id="CHEBI:15379"/>
        <dbReference type="ChEBI" id="CHEBI:16526"/>
        <dbReference type="ChEBI" id="CHEBI:16810"/>
        <dbReference type="ChEBI" id="CHEBI:16842"/>
        <dbReference type="ChEBI" id="CHEBI:30031"/>
        <dbReference type="ChEBI" id="CHEBI:61929"/>
        <dbReference type="ChEBI" id="CHEBI:61961"/>
        <dbReference type="EC" id="1.14.11.69"/>
    </reaction>
</comment>
<comment type="cofactor">
    <cofactor evidence="1">
        <name>Fe(2+)</name>
        <dbReference type="ChEBI" id="CHEBI:29033"/>
    </cofactor>
    <text evidence="1">Binds 1 Fe(2+) ion per subunit.</text>
</comment>
<comment type="subcellular location">
    <subcellularLocation>
        <location evidence="4">Nucleus</location>
    </subcellularLocation>
</comment>
<comment type="similarity">
    <text evidence="7">Belongs to the JHDM3 histone demethylase family.</text>
</comment>